<accession>C5CAZ4</accession>
<keyword id="KW-1185">Reference proteome</keyword>
<keyword id="KW-0687">Ribonucleoprotein</keyword>
<keyword id="KW-0689">Ribosomal protein</keyword>
<gene>
    <name evidence="1" type="primary">rpmA</name>
    <name type="ordered locus">Mlut_10120</name>
</gene>
<evidence type="ECO:0000255" key="1">
    <source>
        <dbReference type="HAMAP-Rule" id="MF_00539"/>
    </source>
</evidence>
<evidence type="ECO:0000256" key="2">
    <source>
        <dbReference type="SAM" id="MobiDB-lite"/>
    </source>
</evidence>
<evidence type="ECO:0000305" key="3"/>
<name>RL27_MICLC</name>
<comment type="similarity">
    <text evidence="1">Belongs to the bacterial ribosomal protein bL27 family.</text>
</comment>
<organism>
    <name type="scientific">Micrococcus luteus (strain ATCC 4698 / DSM 20030 / JCM 1464 / CCM 169 / CCUG 5858 / IAM 1056 / NBRC 3333 / NCIMB 9278 / NCTC 2665 / VKM Ac-2230)</name>
    <name type="common">Micrococcus lysodeikticus</name>
    <dbReference type="NCBI Taxonomy" id="465515"/>
    <lineage>
        <taxon>Bacteria</taxon>
        <taxon>Bacillati</taxon>
        <taxon>Actinomycetota</taxon>
        <taxon>Actinomycetes</taxon>
        <taxon>Micrococcales</taxon>
        <taxon>Micrococcaceae</taxon>
        <taxon>Micrococcus</taxon>
    </lineage>
</organism>
<reference key="1">
    <citation type="journal article" date="2010" name="J. Bacteriol.">
        <title>Genome sequence of the Fleming strain of Micrococcus luteus, a simple free-living actinobacterium.</title>
        <authorList>
            <person name="Young M."/>
            <person name="Artsatbanov V."/>
            <person name="Beller H.R."/>
            <person name="Chandra G."/>
            <person name="Chater K.F."/>
            <person name="Dover L.G."/>
            <person name="Goh E.B."/>
            <person name="Kahan T."/>
            <person name="Kaprelyants A.S."/>
            <person name="Kyrpides N."/>
            <person name="Lapidus A."/>
            <person name="Lowry S.R."/>
            <person name="Lykidis A."/>
            <person name="Mahillon J."/>
            <person name="Markowitz V."/>
            <person name="Mavromatis K."/>
            <person name="Mukamolova G.V."/>
            <person name="Oren A."/>
            <person name="Rokem J.S."/>
            <person name="Smith M.C."/>
            <person name="Young D.I."/>
            <person name="Greenblatt C.L."/>
        </authorList>
    </citation>
    <scope>NUCLEOTIDE SEQUENCE [LARGE SCALE GENOMIC DNA]</scope>
    <source>
        <strain>ATCC 4698 / DSM 20030 / JCM 1464 / CCM 169 / CCUG 5858 / IAM 1056 / NBRC 3333 / NCIMB 9278 / NCTC 2665 / VKM Ac-2230</strain>
    </source>
</reference>
<protein>
    <recommendedName>
        <fullName evidence="1">Large ribosomal subunit protein bL27</fullName>
    </recommendedName>
    <alternativeName>
        <fullName evidence="3">50S ribosomal protein L27</fullName>
    </alternativeName>
</protein>
<proteinExistence type="inferred from homology"/>
<feature type="chain" id="PRO_1000211935" description="Large ribosomal subunit protein bL27">
    <location>
        <begin position="1"/>
        <end position="85"/>
    </location>
</feature>
<feature type="region of interest" description="Disordered" evidence="2">
    <location>
        <begin position="1"/>
        <end position="25"/>
    </location>
</feature>
<feature type="compositionally biased region" description="Polar residues" evidence="2">
    <location>
        <begin position="7"/>
        <end position="19"/>
    </location>
</feature>
<sequence length="85" mass="9096">MAHKKAGSSSKNGRDSNPQYLGVKRYGGEDVNAGEIIVRQRGTKFHPGRNVGRGKDDTLFALSAGSVAFGQRRGRKVVDIVPAAE</sequence>
<dbReference type="EMBL" id="CP001628">
    <property type="protein sequence ID" value="ACS30527.1"/>
    <property type="molecule type" value="Genomic_DNA"/>
</dbReference>
<dbReference type="RefSeq" id="WP_002853915.1">
    <property type="nucleotide sequence ID" value="NZ_WBMF01000020.1"/>
</dbReference>
<dbReference type="SMR" id="C5CAZ4"/>
<dbReference type="STRING" id="465515.Mlut_10120"/>
<dbReference type="EnsemblBacteria" id="ACS30527">
    <property type="protein sequence ID" value="ACS30527"/>
    <property type="gene ID" value="Mlut_10120"/>
</dbReference>
<dbReference type="GeneID" id="93362733"/>
<dbReference type="KEGG" id="mlu:Mlut_10120"/>
<dbReference type="eggNOG" id="COG0211">
    <property type="taxonomic scope" value="Bacteria"/>
</dbReference>
<dbReference type="HOGENOM" id="CLU_095424_4_0_11"/>
<dbReference type="Proteomes" id="UP000000738">
    <property type="component" value="Chromosome"/>
</dbReference>
<dbReference type="GO" id="GO:0022625">
    <property type="term" value="C:cytosolic large ribosomal subunit"/>
    <property type="evidence" value="ECO:0007669"/>
    <property type="project" value="TreeGrafter"/>
</dbReference>
<dbReference type="GO" id="GO:0003735">
    <property type="term" value="F:structural constituent of ribosome"/>
    <property type="evidence" value="ECO:0007669"/>
    <property type="project" value="InterPro"/>
</dbReference>
<dbReference type="GO" id="GO:0006412">
    <property type="term" value="P:translation"/>
    <property type="evidence" value="ECO:0007669"/>
    <property type="project" value="UniProtKB-UniRule"/>
</dbReference>
<dbReference type="FunFam" id="2.40.50.100:FF:000020">
    <property type="entry name" value="50S ribosomal protein L27"/>
    <property type="match status" value="1"/>
</dbReference>
<dbReference type="Gene3D" id="2.40.50.100">
    <property type="match status" value="1"/>
</dbReference>
<dbReference type="HAMAP" id="MF_00539">
    <property type="entry name" value="Ribosomal_bL27"/>
    <property type="match status" value="1"/>
</dbReference>
<dbReference type="InterPro" id="IPR001684">
    <property type="entry name" value="Ribosomal_bL27"/>
</dbReference>
<dbReference type="InterPro" id="IPR018261">
    <property type="entry name" value="Ribosomal_bL27_CS"/>
</dbReference>
<dbReference type="NCBIfam" id="TIGR00062">
    <property type="entry name" value="L27"/>
    <property type="match status" value="1"/>
</dbReference>
<dbReference type="PANTHER" id="PTHR15893:SF0">
    <property type="entry name" value="LARGE RIBOSOMAL SUBUNIT PROTEIN BL27M"/>
    <property type="match status" value="1"/>
</dbReference>
<dbReference type="PANTHER" id="PTHR15893">
    <property type="entry name" value="RIBOSOMAL PROTEIN L27"/>
    <property type="match status" value="1"/>
</dbReference>
<dbReference type="Pfam" id="PF01016">
    <property type="entry name" value="Ribosomal_L27"/>
    <property type="match status" value="1"/>
</dbReference>
<dbReference type="PRINTS" id="PR00063">
    <property type="entry name" value="RIBOSOMALL27"/>
</dbReference>
<dbReference type="SUPFAM" id="SSF110324">
    <property type="entry name" value="Ribosomal L27 protein-like"/>
    <property type="match status" value="1"/>
</dbReference>
<dbReference type="PROSITE" id="PS00831">
    <property type="entry name" value="RIBOSOMAL_L27"/>
    <property type="match status" value="1"/>
</dbReference>